<keyword id="KW-0067">ATP-binding</keyword>
<keyword id="KW-0173">Coenzyme A biosynthesis</keyword>
<keyword id="KW-0963">Cytoplasm</keyword>
<keyword id="KW-0418">Kinase</keyword>
<keyword id="KW-0547">Nucleotide-binding</keyword>
<keyword id="KW-0630">Potassium</keyword>
<keyword id="KW-0808">Transferase</keyword>
<organism>
    <name type="scientific">Burkholderia vietnamiensis (strain G4 / LMG 22486)</name>
    <name type="common">Burkholderia cepacia (strain R1808)</name>
    <dbReference type="NCBI Taxonomy" id="269482"/>
    <lineage>
        <taxon>Bacteria</taxon>
        <taxon>Pseudomonadati</taxon>
        <taxon>Pseudomonadota</taxon>
        <taxon>Betaproteobacteria</taxon>
        <taxon>Burkholderiales</taxon>
        <taxon>Burkholderiaceae</taxon>
        <taxon>Burkholderia</taxon>
        <taxon>Burkholderia cepacia complex</taxon>
    </lineage>
</organism>
<protein>
    <recommendedName>
        <fullName evidence="1">Type III pantothenate kinase</fullName>
        <ecNumber evidence="1">2.7.1.33</ecNumber>
    </recommendedName>
    <alternativeName>
        <fullName evidence="1">PanK-III</fullName>
    </alternativeName>
    <alternativeName>
        <fullName evidence="1">Pantothenic acid kinase</fullName>
    </alternativeName>
</protein>
<accession>A4JI88</accession>
<proteinExistence type="inferred from homology"/>
<sequence>MSAPHLLIDAGNSRIKWALADAQRTLVASGAFGHTRDGGADPDWSALPHPQGAWISNVAGADVAARLDALLDAQWPALPRTTIRARAAQCGVTNGYTSPEQLGSDRWAGLIGARAAFPDEHLLIATFGTATTLEALRADGRFTGGLIAPGWALMMRALGTHTAQLPTLSTDIASGLLADARAEPFQIDTPRSLSAGCLYAQAGLIERACRDLAAAWQAPVRLVLAGGAADDVARALTLPHTRHDGLILSGLALIAAEGAARD</sequence>
<reference key="1">
    <citation type="submission" date="2007-03" db="EMBL/GenBank/DDBJ databases">
        <title>Complete sequence of chromosome 1 of Burkholderia vietnamiensis G4.</title>
        <authorList>
            <consortium name="US DOE Joint Genome Institute"/>
            <person name="Copeland A."/>
            <person name="Lucas S."/>
            <person name="Lapidus A."/>
            <person name="Barry K."/>
            <person name="Detter J.C."/>
            <person name="Glavina del Rio T."/>
            <person name="Hammon N."/>
            <person name="Israni S."/>
            <person name="Dalin E."/>
            <person name="Tice H."/>
            <person name="Pitluck S."/>
            <person name="Chain P."/>
            <person name="Malfatti S."/>
            <person name="Shin M."/>
            <person name="Vergez L."/>
            <person name="Schmutz J."/>
            <person name="Larimer F."/>
            <person name="Land M."/>
            <person name="Hauser L."/>
            <person name="Kyrpides N."/>
            <person name="Tiedje J."/>
            <person name="Richardson P."/>
        </authorList>
    </citation>
    <scope>NUCLEOTIDE SEQUENCE [LARGE SCALE GENOMIC DNA]</scope>
    <source>
        <strain>G4 / LMG 22486</strain>
    </source>
</reference>
<name>COAX_BURVG</name>
<feature type="chain" id="PRO_1000054367" description="Type III pantothenate kinase">
    <location>
        <begin position="1"/>
        <end position="262"/>
    </location>
</feature>
<feature type="active site" description="Proton acceptor" evidence="1">
    <location>
        <position position="105"/>
    </location>
</feature>
<feature type="binding site" evidence="1">
    <location>
        <begin position="9"/>
        <end position="16"/>
    </location>
    <ligand>
        <name>ATP</name>
        <dbReference type="ChEBI" id="CHEBI:30616"/>
    </ligand>
</feature>
<feature type="binding site" evidence="1">
    <location>
        <position position="96"/>
    </location>
    <ligand>
        <name>substrate</name>
    </ligand>
</feature>
<feature type="binding site" evidence="1">
    <location>
        <begin position="103"/>
        <end position="106"/>
    </location>
    <ligand>
        <name>substrate</name>
    </ligand>
</feature>
<feature type="binding site" evidence="1">
    <location>
        <position position="129"/>
    </location>
    <ligand>
        <name>ATP</name>
        <dbReference type="ChEBI" id="CHEBI:30616"/>
    </ligand>
</feature>
<feature type="binding site" evidence="1">
    <location>
        <position position="189"/>
    </location>
    <ligand>
        <name>substrate</name>
    </ligand>
</feature>
<dbReference type="EC" id="2.7.1.33" evidence="1"/>
<dbReference type="EMBL" id="CP000614">
    <property type="protein sequence ID" value="ABO55991.1"/>
    <property type="molecule type" value="Genomic_DNA"/>
</dbReference>
<dbReference type="SMR" id="A4JI88"/>
<dbReference type="KEGG" id="bvi:Bcep1808_3000"/>
<dbReference type="eggNOG" id="COG1521">
    <property type="taxonomic scope" value="Bacteria"/>
</dbReference>
<dbReference type="HOGENOM" id="CLU_066627_0_0_4"/>
<dbReference type="UniPathway" id="UPA00241">
    <property type="reaction ID" value="UER00352"/>
</dbReference>
<dbReference type="Proteomes" id="UP000002287">
    <property type="component" value="Chromosome 1"/>
</dbReference>
<dbReference type="GO" id="GO:0005737">
    <property type="term" value="C:cytoplasm"/>
    <property type="evidence" value="ECO:0007669"/>
    <property type="project" value="UniProtKB-SubCell"/>
</dbReference>
<dbReference type="GO" id="GO:0005524">
    <property type="term" value="F:ATP binding"/>
    <property type="evidence" value="ECO:0007669"/>
    <property type="project" value="UniProtKB-UniRule"/>
</dbReference>
<dbReference type="GO" id="GO:0004594">
    <property type="term" value="F:pantothenate kinase activity"/>
    <property type="evidence" value="ECO:0007669"/>
    <property type="project" value="UniProtKB-UniRule"/>
</dbReference>
<dbReference type="GO" id="GO:0015937">
    <property type="term" value="P:coenzyme A biosynthetic process"/>
    <property type="evidence" value="ECO:0007669"/>
    <property type="project" value="UniProtKB-UniRule"/>
</dbReference>
<dbReference type="CDD" id="cd24015">
    <property type="entry name" value="ASKHA_NBD_PanK-III"/>
    <property type="match status" value="1"/>
</dbReference>
<dbReference type="Gene3D" id="3.30.420.40">
    <property type="match status" value="2"/>
</dbReference>
<dbReference type="HAMAP" id="MF_01274">
    <property type="entry name" value="Pantothen_kinase_3"/>
    <property type="match status" value="1"/>
</dbReference>
<dbReference type="InterPro" id="IPR043129">
    <property type="entry name" value="ATPase_NBD"/>
</dbReference>
<dbReference type="InterPro" id="IPR004619">
    <property type="entry name" value="Type_III_PanK"/>
</dbReference>
<dbReference type="NCBIfam" id="TIGR00671">
    <property type="entry name" value="baf"/>
    <property type="match status" value="1"/>
</dbReference>
<dbReference type="NCBIfam" id="NF009868">
    <property type="entry name" value="PRK13328.1-4"/>
    <property type="match status" value="1"/>
</dbReference>
<dbReference type="PANTHER" id="PTHR34265">
    <property type="entry name" value="TYPE III PANTOTHENATE KINASE"/>
    <property type="match status" value="1"/>
</dbReference>
<dbReference type="PANTHER" id="PTHR34265:SF1">
    <property type="entry name" value="TYPE III PANTOTHENATE KINASE"/>
    <property type="match status" value="1"/>
</dbReference>
<dbReference type="Pfam" id="PF03309">
    <property type="entry name" value="Pan_kinase"/>
    <property type="match status" value="1"/>
</dbReference>
<dbReference type="SUPFAM" id="SSF53067">
    <property type="entry name" value="Actin-like ATPase domain"/>
    <property type="match status" value="2"/>
</dbReference>
<evidence type="ECO:0000255" key="1">
    <source>
        <dbReference type="HAMAP-Rule" id="MF_01274"/>
    </source>
</evidence>
<comment type="function">
    <text evidence="1">Catalyzes the phosphorylation of pantothenate (Pan), the first step in CoA biosynthesis.</text>
</comment>
<comment type="catalytic activity">
    <reaction evidence="1">
        <text>(R)-pantothenate + ATP = (R)-4'-phosphopantothenate + ADP + H(+)</text>
        <dbReference type="Rhea" id="RHEA:16373"/>
        <dbReference type="ChEBI" id="CHEBI:10986"/>
        <dbReference type="ChEBI" id="CHEBI:15378"/>
        <dbReference type="ChEBI" id="CHEBI:29032"/>
        <dbReference type="ChEBI" id="CHEBI:30616"/>
        <dbReference type="ChEBI" id="CHEBI:456216"/>
        <dbReference type="EC" id="2.7.1.33"/>
    </reaction>
</comment>
<comment type="cofactor">
    <cofactor evidence="1">
        <name>NH4(+)</name>
        <dbReference type="ChEBI" id="CHEBI:28938"/>
    </cofactor>
    <cofactor evidence="1">
        <name>K(+)</name>
        <dbReference type="ChEBI" id="CHEBI:29103"/>
    </cofactor>
    <text evidence="1">A monovalent cation. Ammonium or potassium.</text>
</comment>
<comment type="pathway">
    <text evidence="1">Cofactor biosynthesis; coenzyme A biosynthesis; CoA from (R)-pantothenate: step 1/5.</text>
</comment>
<comment type="subunit">
    <text evidence="1">Homodimer.</text>
</comment>
<comment type="subcellular location">
    <subcellularLocation>
        <location evidence="1">Cytoplasm</location>
    </subcellularLocation>
</comment>
<comment type="similarity">
    <text evidence="1">Belongs to the type III pantothenate kinase family.</text>
</comment>
<gene>
    <name evidence="1" type="primary">coaX</name>
    <name type="ordered locus">Bcep1808_3000</name>
</gene>